<name>RL16_AZOC5</name>
<dbReference type="EMBL" id="AP009384">
    <property type="protein sequence ID" value="BAF88545.1"/>
    <property type="molecule type" value="Genomic_DNA"/>
</dbReference>
<dbReference type="RefSeq" id="WP_012171073.1">
    <property type="nucleotide sequence ID" value="NC_009937.1"/>
</dbReference>
<dbReference type="SMR" id="A8IAR0"/>
<dbReference type="STRING" id="438753.AZC_2547"/>
<dbReference type="KEGG" id="azc:AZC_2547"/>
<dbReference type="eggNOG" id="COG0197">
    <property type="taxonomic scope" value="Bacteria"/>
</dbReference>
<dbReference type="HOGENOM" id="CLU_078858_2_1_5"/>
<dbReference type="Proteomes" id="UP000000270">
    <property type="component" value="Chromosome"/>
</dbReference>
<dbReference type="GO" id="GO:0022625">
    <property type="term" value="C:cytosolic large ribosomal subunit"/>
    <property type="evidence" value="ECO:0007669"/>
    <property type="project" value="TreeGrafter"/>
</dbReference>
<dbReference type="GO" id="GO:0019843">
    <property type="term" value="F:rRNA binding"/>
    <property type="evidence" value="ECO:0007669"/>
    <property type="project" value="UniProtKB-UniRule"/>
</dbReference>
<dbReference type="GO" id="GO:0003735">
    <property type="term" value="F:structural constituent of ribosome"/>
    <property type="evidence" value="ECO:0007669"/>
    <property type="project" value="InterPro"/>
</dbReference>
<dbReference type="GO" id="GO:0000049">
    <property type="term" value="F:tRNA binding"/>
    <property type="evidence" value="ECO:0007669"/>
    <property type="project" value="UniProtKB-KW"/>
</dbReference>
<dbReference type="GO" id="GO:0006412">
    <property type="term" value="P:translation"/>
    <property type="evidence" value="ECO:0007669"/>
    <property type="project" value="UniProtKB-UniRule"/>
</dbReference>
<dbReference type="CDD" id="cd01433">
    <property type="entry name" value="Ribosomal_L16_L10e"/>
    <property type="match status" value="1"/>
</dbReference>
<dbReference type="FunFam" id="3.90.1170.10:FF:000001">
    <property type="entry name" value="50S ribosomal protein L16"/>
    <property type="match status" value="1"/>
</dbReference>
<dbReference type="Gene3D" id="3.90.1170.10">
    <property type="entry name" value="Ribosomal protein L10e/L16"/>
    <property type="match status" value="1"/>
</dbReference>
<dbReference type="HAMAP" id="MF_01342">
    <property type="entry name" value="Ribosomal_uL16"/>
    <property type="match status" value="1"/>
</dbReference>
<dbReference type="InterPro" id="IPR047873">
    <property type="entry name" value="Ribosomal_uL16"/>
</dbReference>
<dbReference type="InterPro" id="IPR000114">
    <property type="entry name" value="Ribosomal_uL16_bact-type"/>
</dbReference>
<dbReference type="InterPro" id="IPR020798">
    <property type="entry name" value="Ribosomal_uL16_CS"/>
</dbReference>
<dbReference type="InterPro" id="IPR016180">
    <property type="entry name" value="Ribosomal_uL16_dom"/>
</dbReference>
<dbReference type="InterPro" id="IPR036920">
    <property type="entry name" value="Ribosomal_uL16_sf"/>
</dbReference>
<dbReference type="NCBIfam" id="TIGR01164">
    <property type="entry name" value="rplP_bact"/>
    <property type="match status" value="1"/>
</dbReference>
<dbReference type="PANTHER" id="PTHR12220">
    <property type="entry name" value="50S/60S RIBOSOMAL PROTEIN L16"/>
    <property type="match status" value="1"/>
</dbReference>
<dbReference type="PANTHER" id="PTHR12220:SF13">
    <property type="entry name" value="LARGE RIBOSOMAL SUBUNIT PROTEIN UL16M"/>
    <property type="match status" value="1"/>
</dbReference>
<dbReference type="Pfam" id="PF00252">
    <property type="entry name" value="Ribosomal_L16"/>
    <property type="match status" value="1"/>
</dbReference>
<dbReference type="PRINTS" id="PR00060">
    <property type="entry name" value="RIBOSOMALL16"/>
</dbReference>
<dbReference type="SUPFAM" id="SSF54686">
    <property type="entry name" value="Ribosomal protein L16p/L10e"/>
    <property type="match status" value="1"/>
</dbReference>
<dbReference type="PROSITE" id="PS00586">
    <property type="entry name" value="RIBOSOMAL_L16_1"/>
    <property type="match status" value="1"/>
</dbReference>
<dbReference type="PROSITE" id="PS00701">
    <property type="entry name" value="RIBOSOMAL_L16_2"/>
    <property type="match status" value="1"/>
</dbReference>
<reference key="1">
    <citation type="submission" date="2007-04" db="EMBL/GenBank/DDBJ databases">
        <title>Complete genome sequence of the nitrogen-fixing bacterium Azorhizobium caulinodans ORS571.</title>
        <authorList>
            <person name="Lee K.B."/>
            <person name="Backer P.D."/>
            <person name="Aono T."/>
            <person name="Liu C.T."/>
            <person name="Suzuki S."/>
            <person name="Suzuki T."/>
            <person name="Kaneko T."/>
            <person name="Yamada M."/>
            <person name="Tabata S."/>
            <person name="Kupfer D.M."/>
            <person name="Najar F.Z."/>
            <person name="Wiley G.B."/>
            <person name="Roe B."/>
            <person name="Binnewies T."/>
            <person name="Ussery D."/>
            <person name="Vereecke D."/>
            <person name="Gevers D."/>
            <person name="Holsters M."/>
            <person name="Oyaizu H."/>
        </authorList>
    </citation>
    <scope>NUCLEOTIDE SEQUENCE [LARGE SCALE GENOMIC DNA]</scope>
    <source>
        <strain>ATCC 43989 / DSM 5975 / JCM 20966 / LMG 6465 / NBRC 14845 / NCIMB 13405 / ORS 571</strain>
    </source>
</reference>
<gene>
    <name evidence="1" type="primary">rplP</name>
    <name type="ordered locus">AZC_2547</name>
</gene>
<proteinExistence type="inferred from homology"/>
<sequence length="137" mass="15446">MLQPKRTKFRKQFKGRIHGVAKGGTELNFGEFGLKALEPERVTARQIEAARRALTRHMKRAGRVWIRVFPDVPVTSKPTEVRMGKGKGAPEYWAAKVKPGRIMFEIDGVPVDLAREALTLAAAKLPIKTRFIQRIAE</sequence>
<protein>
    <recommendedName>
        <fullName evidence="1">Large ribosomal subunit protein uL16</fullName>
    </recommendedName>
    <alternativeName>
        <fullName evidence="2">50S ribosomal protein L16</fullName>
    </alternativeName>
</protein>
<accession>A8IAR0</accession>
<organism>
    <name type="scientific">Azorhizobium caulinodans (strain ATCC 43989 / DSM 5975 / JCM 20966 / LMG 6465 / NBRC 14845 / NCIMB 13405 / ORS 571)</name>
    <dbReference type="NCBI Taxonomy" id="438753"/>
    <lineage>
        <taxon>Bacteria</taxon>
        <taxon>Pseudomonadati</taxon>
        <taxon>Pseudomonadota</taxon>
        <taxon>Alphaproteobacteria</taxon>
        <taxon>Hyphomicrobiales</taxon>
        <taxon>Xanthobacteraceae</taxon>
        <taxon>Azorhizobium</taxon>
    </lineage>
</organism>
<keyword id="KW-1185">Reference proteome</keyword>
<keyword id="KW-0687">Ribonucleoprotein</keyword>
<keyword id="KW-0689">Ribosomal protein</keyword>
<keyword id="KW-0694">RNA-binding</keyword>
<keyword id="KW-0699">rRNA-binding</keyword>
<keyword id="KW-0820">tRNA-binding</keyword>
<feature type="chain" id="PRO_1000073323" description="Large ribosomal subunit protein uL16">
    <location>
        <begin position="1"/>
        <end position="137"/>
    </location>
</feature>
<comment type="function">
    <text evidence="1">Binds 23S rRNA and is also seen to make contacts with the A and possibly P site tRNAs.</text>
</comment>
<comment type="subunit">
    <text evidence="1">Part of the 50S ribosomal subunit.</text>
</comment>
<comment type="similarity">
    <text evidence="1">Belongs to the universal ribosomal protein uL16 family.</text>
</comment>
<evidence type="ECO:0000255" key="1">
    <source>
        <dbReference type="HAMAP-Rule" id="MF_01342"/>
    </source>
</evidence>
<evidence type="ECO:0000305" key="2"/>